<sequence length="401" mass="44091">MTLPKIKHVRAWFIGGATAEKGAGGGDYHDQGGNHWIADHIATPMSKYRDYEQSRQSFGINVLGTLIVEVEAENGQTGFAVSTAGEMGCFIVEKHLNRFIEGKCVSDIKLIHDQMLGATMYYSGSGGLVMNTISCVDLALWDLFGKVVGLPVYKLLGGAVRDEIQFYATGARPDLAKEMGFIGGKMPTHWGPHDGDAGIRKDAAMVADMREKCGPDFWLMLDCWMSQDVNYATKLAHACAPFNLKWIEECLPPQQYEGYRELKRNAPAGMMVTSGEHHGTLQSFRTLSETGIDIMQPDVGWCGGLTTLVEIAALAKSRGQLVVPHGSSVYSHHAVITFTNTPFSEFLMTSPDCSTLRPQFDPILLDEPVPVNGRIHKSVLDKPGFGVELNRDCHLKRPYSH</sequence>
<comment type="function">
    <text evidence="1">Catalyzes the dehydration of L-rhamnonate to 2-keto-3-deoxy-L-rhamnonate (KDR).</text>
</comment>
<comment type="catalytic activity">
    <reaction evidence="1">
        <text>L-rhamnonate = 2-dehydro-3-deoxy-L-rhamnonate + H2O</text>
        <dbReference type="Rhea" id="RHEA:23080"/>
        <dbReference type="ChEBI" id="CHEBI:15377"/>
        <dbReference type="ChEBI" id="CHEBI:58118"/>
        <dbReference type="ChEBI" id="CHEBI:58371"/>
        <dbReference type="EC" id="4.2.1.90"/>
    </reaction>
</comment>
<comment type="cofactor">
    <cofactor evidence="1">
        <name>Mg(2+)</name>
        <dbReference type="ChEBI" id="CHEBI:18420"/>
    </cofactor>
    <text evidence="1">Binds 1 Mg(2+) ion per subunit.</text>
</comment>
<comment type="subunit">
    <text evidence="1">Homooctamer; tetramer of dimers.</text>
</comment>
<comment type="miscellaneous">
    <text evidence="1">Reaction proceeds via a syn dehydration.</text>
</comment>
<comment type="similarity">
    <text evidence="1">Belongs to the mandelate racemase/muconate lactonizing enzyme family. RhamD subfamily.</text>
</comment>
<dbReference type="EC" id="4.2.1.90" evidence="1"/>
<dbReference type="EMBL" id="CP001120">
    <property type="protein sequence ID" value="ACF69822.1"/>
    <property type="molecule type" value="Genomic_DNA"/>
</dbReference>
<dbReference type="SMR" id="B4TBF8"/>
<dbReference type="KEGG" id="seh:SeHA_C2531"/>
<dbReference type="HOGENOM" id="CLU_030273_1_0_6"/>
<dbReference type="Proteomes" id="UP000001866">
    <property type="component" value="Chromosome"/>
</dbReference>
<dbReference type="GO" id="GO:0050032">
    <property type="term" value="F:L-rhamnonate dehydratase activity"/>
    <property type="evidence" value="ECO:0007669"/>
    <property type="project" value="UniProtKB-UniRule"/>
</dbReference>
<dbReference type="GO" id="GO:0000287">
    <property type="term" value="F:magnesium ion binding"/>
    <property type="evidence" value="ECO:0007669"/>
    <property type="project" value="UniProtKB-UniRule"/>
</dbReference>
<dbReference type="GO" id="GO:0009063">
    <property type="term" value="P:amino acid catabolic process"/>
    <property type="evidence" value="ECO:0007669"/>
    <property type="project" value="InterPro"/>
</dbReference>
<dbReference type="GO" id="GO:0016052">
    <property type="term" value="P:carbohydrate catabolic process"/>
    <property type="evidence" value="ECO:0007669"/>
    <property type="project" value="TreeGrafter"/>
</dbReference>
<dbReference type="CDD" id="cd03327">
    <property type="entry name" value="MR_like_2"/>
    <property type="match status" value="1"/>
</dbReference>
<dbReference type="FunFam" id="3.30.390.10:FF:000007">
    <property type="entry name" value="L-rhamnonate dehydratase"/>
    <property type="match status" value="1"/>
</dbReference>
<dbReference type="FunFam" id="3.20.20.120:FF:000005">
    <property type="entry name" value="Putative L-rhamnonate dehydratase"/>
    <property type="match status" value="1"/>
</dbReference>
<dbReference type="Gene3D" id="3.20.20.120">
    <property type="entry name" value="Enolase-like C-terminal domain"/>
    <property type="match status" value="1"/>
</dbReference>
<dbReference type="Gene3D" id="3.30.390.10">
    <property type="entry name" value="Enolase-like, N-terminal domain"/>
    <property type="match status" value="1"/>
</dbReference>
<dbReference type="HAMAP" id="MF_01288">
    <property type="entry name" value="Rhamnon_dehydrat"/>
    <property type="match status" value="1"/>
</dbReference>
<dbReference type="InterPro" id="IPR036849">
    <property type="entry name" value="Enolase-like_C_sf"/>
</dbReference>
<dbReference type="InterPro" id="IPR029017">
    <property type="entry name" value="Enolase-like_N"/>
</dbReference>
<dbReference type="InterPro" id="IPR029065">
    <property type="entry name" value="Enolase_C-like"/>
</dbReference>
<dbReference type="InterPro" id="IPR023444">
    <property type="entry name" value="L-Rhamnon_dehydrat"/>
</dbReference>
<dbReference type="InterPro" id="IPR018110">
    <property type="entry name" value="Mandel_Rmase/mucon_lact_enz_CS"/>
</dbReference>
<dbReference type="InterPro" id="IPR013342">
    <property type="entry name" value="Mandelate_racemase_C"/>
</dbReference>
<dbReference type="InterPro" id="IPR013341">
    <property type="entry name" value="Mandelate_racemase_N_dom"/>
</dbReference>
<dbReference type="InterPro" id="IPR046945">
    <property type="entry name" value="RHMD-like"/>
</dbReference>
<dbReference type="NCBIfam" id="NF011968">
    <property type="entry name" value="PRK15440.1"/>
    <property type="match status" value="1"/>
</dbReference>
<dbReference type="PANTHER" id="PTHR13794">
    <property type="entry name" value="ENOLASE SUPERFAMILY, MANDELATE RACEMASE"/>
    <property type="match status" value="1"/>
</dbReference>
<dbReference type="PANTHER" id="PTHR13794:SF58">
    <property type="entry name" value="MITOCHONDRIAL ENOLASE SUPERFAMILY MEMBER 1"/>
    <property type="match status" value="1"/>
</dbReference>
<dbReference type="Pfam" id="PF13378">
    <property type="entry name" value="MR_MLE_C"/>
    <property type="match status" value="1"/>
</dbReference>
<dbReference type="Pfam" id="PF02746">
    <property type="entry name" value="MR_MLE_N"/>
    <property type="match status" value="1"/>
</dbReference>
<dbReference type="SFLD" id="SFLDG00179">
    <property type="entry name" value="mandelate_racemase"/>
    <property type="match status" value="1"/>
</dbReference>
<dbReference type="SFLD" id="SFLDF00006">
    <property type="entry name" value="rhamnonate_dehydratase"/>
    <property type="match status" value="1"/>
</dbReference>
<dbReference type="SMART" id="SM00922">
    <property type="entry name" value="MR_MLE"/>
    <property type="match status" value="1"/>
</dbReference>
<dbReference type="SUPFAM" id="SSF51604">
    <property type="entry name" value="Enolase C-terminal domain-like"/>
    <property type="match status" value="1"/>
</dbReference>
<dbReference type="SUPFAM" id="SSF54826">
    <property type="entry name" value="Enolase N-terminal domain-like"/>
    <property type="match status" value="1"/>
</dbReference>
<dbReference type="PROSITE" id="PS00908">
    <property type="entry name" value="MR_MLE_1"/>
    <property type="match status" value="1"/>
</dbReference>
<accession>B4TBF8</accession>
<gene>
    <name evidence="1" type="primary">rhmD</name>
    <name type="ordered locus">SeHA_C2531</name>
</gene>
<organism>
    <name type="scientific">Salmonella heidelberg (strain SL476)</name>
    <dbReference type="NCBI Taxonomy" id="454169"/>
    <lineage>
        <taxon>Bacteria</taxon>
        <taxon>Pseudomonadati</taxon>
        <taxon>Pseudomonadota</taxon>
        <taxon>Gammaproteobacteria</taxon>
        <taxon>Enterobacterales</taxon>
        <taxon>Enterobacteriaceae</taxon>
        <taxon>Salmonella</taxon>
    </lineage>
</organism>
<reference key="1">
    <citation type="journal article" date="2011" name="J. Bacteriol.">
        <title>Comparative genomics of 28 Salmonella enterica isolates: evidence for CRISPR-mediated adaptive sublineage evolution.</title>
        <authorList>
            <person name="Fricke W.F."/>
            <person name="Mammel M.K."/>
            <person name="McDermott P.F."/>
            <person name="Tartera C."/>
            <person name="White D.G."/>
            <person name="Leclerc J.E."/>
            <person name="Ravel J."/>
            <person name="Cebula T.A."/>
        </authorList>
    </citation>
    <scope>NUCLEOTIDE SEQUENCE [LARGE SCALE GENOMIC DNA]</scope>
    <source>
        <strain>SL476</strain>
    </source>
</reference>
<protein>
    <recommendedName>
        <fullName evidence="1">L-rhamnonate dehydratase</fullName>
        <shortName evidence="1">RhamD</shortName>
        <ecNumber evidence="1">4.2.1.90</ecNumber>
    </recommendedName>
</protein>
<name>RHMD_SALHS</name>
<evidence type="ECO:0000255" key="1">
    <source>
        <dbReference type="HAMAP-Rule" id="MF_01288"/>
    </source>
</evidence>
<proteinExistence type="inferred from homology"/>
<keyword id="KW-0456">Lyase</keyword>
<keyword id="KW-0460">Magnesium</keyword>
<keyword id="KW-0479">Metal-binding</keyword>
<feature type="chain" id="PRO_1000165264" description="L-rhamnonate dehydratase">
    <location>
        <begin position="1"/>
        <end position="401"/>
    </location>
</feature>
<feature type="active site" description="Proton acceptor" evidence="1">
    <location>
        <position position="325"/>
    </location>
</feature>
<feature type="binding site" evidence="1">
    <location>
        <position position="29"/>
    </location>
    <ligand>
        <name>substrate</name>
    </ligand>
</feature>
<feature type="binding site" evidence="1">
    <location>
        <position position="55"/>
    </location>
    <ligand>
        <name>substrate</name>
    </ligand>
</feature>
<feature type="binding site" evidence="1">
    <location>
        <position position="222"/>
    </location>
    <ligand>
        <name>Mg(2+)</name>
        <dbReference type="ChEBI" id="CHEBI:18420"/>
    </ligand>
</feature>
<feature type="binding site" evidence="1">
    <location>
        <position position="248"/>
    </location>
    <ligand>
        <name>Mg(2+)</name>
        <dbReference type="ChEBI" id="CHEBI:18420"/>
    </ligand>
</feature>
<feature type="binding site" evidence="1">
    <location>
        <position position="276"/>
    </location>
    <ligand>
        <name>Mg(2+)</name>
        <dbReference type="ChEBI" id="CHEBI:18420"/>
    </ligand>
</feature>
<feature type="binding site" evidence="1">
    <location>
        <position position="345"/>
    </location>
    <ligand>
        <name>substrate</name>
    </ligand>
</feature>
<feature type="site" description="Increases basicity of active site His" evidence="1">
    <location>
        <position position="298"/>
    </location>
</feature>
<feature type="site" description="Transition state stabilizer" evidence="1">
    <location>
        <position position="345"/>
    </location>
</feature>